<keyword id="KW-0963">Cytoplasm</keyword>
<keyword id="KW-0289">Folate biosynthesis</keyword>
<keyword id="KW-0456">Lyase</keyword>
<keyword id="KW-0539">Nucleus</keyword>
<keyword id="KW-0663">Pyridoxal phosphate</keyword>
<keyword id="KW-1185">Reference proteome</keyword>
<reference key="1">
    <citation type="journal article" date="2002" name="Nature">
        <title>The genome sequence of Schizosaccharomyces pombe.</title>
        <authorList>
            <person name="Wood V."/>
            <person name="Gwilliam R."/>
            <person name="Rajandream M.A."/>
            <person name="Lyne M.H."/>
            <person name="Lyne R."/>
            <person name="Stewart A."/>
            <person name="Sgouros J.G."/>
            <person name="Peat N."/>
            <person name="Hayles J."/>
            <person name="Baker S.G."/>
            <person name="Basham D."/>
            <person name="Bowman S."/>
            <person name="Brooks K."/>
            <person name="Brown D."/>
            <person name="Brown S."/>
            <person name="Chillingworth T."/>
            <person name="Churcher C.M."/>
            <person name="Collins M."/>
            <person name="Connor R."/>
            <person name="Cronin A."/>
            <person name="Davis P."/>
            <person name="Feltwell T."/>
            <person name="Fraser A."/>
            <person name="Gentles S."/>
            <person name="Goble A."/>
            <person name="Hamlin N."/>
            <person name="Harris D.E."/>
            <person name="Hidalgo J."/>
            <person name="Hodgson G."/>
            <person name="Holroyd S."/>
            <person name="Hornsby T."/>
            <person name="Howarth S."/>
            <person name="Huckle E.J."/>
            <person name="Hunt S."/>
            <person name="Jagels K."/>
            <person name="James K.D."/>
            <person name="Jones L."/>
            <person name="Jones M."/>
            <person name="Leather S."/>
            <person name="McDonald S."/>
            <person name="McLean J."/>
            <person name="Mooney P."/>
            <person name="Moule S."/>
            <person name="Mungall K.L."/>
            <person name="Murphy L.D."/>
            <person name="Niblett D."/>
            <person name="Odell C."/>
            <person name="Oliver K."/>
            <person name="O'Neil S."/>
            <person name="Pearson D."/>
            <person name="Quail M.A."/>
            <person name="Rabbinowitsch E."/>
            <person name="Rutherford K.M."/>
            <person name="Rutter S."/>
            <person name="Saunders D."/>
            <person name="Seeger K."/>
            <person name="Sharp S."/>
            <person name="Skelton J."/>
            <person name="Simmonds M.N."/>
            <person name="Squares R."/>
            <person name="Squares S."/>
            <person name="Stevens K."/>
            <person name="Taylor K."/>
            <person name="Taylor R.G."/>
            <person name="Tivey A."/>
            <person name="Walsh S.V."/>
            <person name="Warren T."/>
            <person name="Whitehead S."/>
            <person name="Woodward J.R."/>
            <person name="Volckaert G."/>
            <person name="Aert R."/>
            <person name="Robben J."/>
            <person name="Grymonprez B."/>
            <person name="Weltjens I."/>
            <person name="Vanstreels E."/>
            <person name="Rieger M."/>
            <person name="Schaefer M."/>
            <person name="Mueller-Auer S."/>
            <person name="Gabel C."/>
            <person name="Fuchs M."/>
            <person name="Duesterhoeft A."/>
            <person name="Fritzc C."/>
            <person name="Holzer E."/>
            <person name="Moestl D."/>
            <person name="Hilbert H."/>
            <person name="Borzym K."/>
            <person name="Langer I."/>
            <person name="Beck A."/>
            <person name="Lehrach H."/>
            <person name="Reinhardt R."/>
            <person name="Pohl T.M."/>
            <person name="Eger P."/>
            <person name="Zimmermann W."/>
            <person name="Wedler H."/>
            <person name="Wambutt R."/>
            <person name="Purnelle B."/>
            <person name="Goffeau A."/>
            <person name="Cadieu E."/>
            <person name="Dreano S."/>
            <person name="Gloux S."/>
            <person name="Lelaure V."/>
            <person name="Mottier S."/>
            <person name="Galibert F."/>
            <person name="Aves S.J."/>
            <person name="Xiang Z."/>
            <person name="Hunt C."/>
            <person name="Moore K."/>
            <person name="Hurst S.M."/>
            <person name="Lucas M."/>
            <person name="Rochet M."/>
            <person name="Gaillardin C."/>
            <person name="Tallada V.A."/>
            <person name="Garzon A."/>
            <person name="Thode G."/>
            <person name="Daga R.R."/>
            <person name="Cruzado L."/>
            <person name="Jimenez J."/>
            <person name="Sanchez M."/>
            <person name="del Rey F."/>
            <person name="Benito J."/>
            <person name="Dominguez A."/>
            <person name="Revuelta J.L."/>
            <person name="Moreno S."/>
            <person name="Armstrong J."/>
            <person name="Forsburg S.L."/>
            <person name="Cerutti L."/>
            <person name="Lowe T."/>
            <person name="McCombie W.R."/>
            <person name="Paulsen I."/>
            <person name="Potashkin J."/>
            <person name="Shpakovski G.V."/>
            <person name="Ussery D."/>
            <person name="Barrell B.G."/>
            <person name="Nurse P."/>
        </authorList>
    </citation>
    <scope>NUCLEOTIDE SEQUENCE [LARGE SCALE GENOMIC DNA]</scope>
    <source>
        <strain>972 / ATCC 24843</strain>
    </source>
</reference>
<reference key="2">
    <citation type="journal article" date="2006" name="Nat. Biotechnol.">
        <title>ORFeome cloning and global analysis of protein localization in the fission yeast Schizosaccharomyces pombe.</title>
        <authorList>
            <person name="Matsuyama A."/>
            <person name="Arai R."/>
            <person name="Yashiroda Y."/>
            <person name="Shirai A."/>
            <person name="Kamata A."/>
            <person name="Sekido S."/>
            <person name="Kobayashi Y."/>
            <person name="Hashimoto A."/>
            <person name="Hamamoto M."/>
            <person name="Hiraoka Y."/>
            <person name="Horinouchi S."/>
            <person name="Yoshida M."/>
        </authorList>
    </citation>
    <scope>SUBCELLULAR LOCATION [LARGE SCALE ANALYSIS]</scope>
</reference>
<gene>
    <name type="ORF">SPBC19G7.02</name>
</gene>
<organism>
    <name type="scientific">Schizosaccharomyces pombe (strain 972 / ATCC 24843)</name>
    <name type="common">Fission yeast</name>
    <dbReference type="NCBI Taxonomy" id="284812"/>
    <lineage>
        <taxon>Eukaryota</taxon>
        <taxon>Fungi</taxon>
        <taxon>Dikarya</taxon>
        <taxon>Ascomycota</taxon>
        <taxon>Taphrinomycotina</taxon>
        <taxon>Schizosaccharomycetes</taxon>
        <taxon>Schizosaccharomycetales</taxon>
        <taxon>Schizosaccharomycetaceae</taxon>
        <taxon>Schizosaccharomyces</taxon>
    </lineage>
</organism>
<feature type="chain" id="PRO_0000339123" description="Putative aminodeoxychorismate lyase">
    <location>
        <begin position="1"/>
        <end position="231"/>
    </location>
</feature>
<protein>
    <recommendedName>
        <fullName>Putative aminodeoxychorismate lyase</fullName>
        <ecNumber>4.1.3.38</ecNumber>
    </recommendedName>
    <alternativeName>
        <fullName>4-amino-4-deoxychorismate lyase</fullName>
        <shortName>ADC lyase</shortName>
        <shortName>ADCL</shortName>
    </alternativeName>
</protein>
<dbReference type="EC" id="4.1.3.38"/>
<dbReference type="EMBL" id="CU329671">
    <property type="protein sequence ID" value="CAA17056.1"/>
    <property type="molecule type" value="Genomic_DNA"/>
</dbReference>
<dbReference type="PIR" id="T39833">
    <property type="entry name" value="T39833"/>
</dbReference>
<dbReference type="RefSeq" id="NP_595968.1">
    <property type="nucleotide sequence ID" value="NM_001021876.2"/>
</dbReference>
<dbReference type="SMR" id="O42951"/>
<dbReference type="BioGRID" id="277187">
    <property type="interactions" value="2"/>
</dbReference>
<dbReference type="FunCoup" id="O42951">
    <property type="interactions" value="105"/>
</dbReference>
<dbReference type="STRING" id="284812.O42951"/>
<dbReference type="PaxDb" id="4896-SPBC19G7.02.1"/>
<dbReference type="EnsemblFungi" id="SPBC19G7.02.1">
    <property type="protein sequence ID" value="SPBC19G7.02.1:pep"/>
    <property type="gene ID" value="SPBC19G7.02"/>
</dbReference>
<dbReference type="PomBase" id="SPBC19G7.02"/>
<dbReference type="VEuPathDB" id="FungiDB:SPBC19G7.02"/>
<dbReference type="eggNOG" id="ENOG502S7GD">
    <property type="taxonomic scope" value="Eukaryota"/>
</dbReference>
<dbReference type="HOGENOM" id="CLU_020844_6_1_1"/>
<dbReference type="InParanoid" id="O42951"/>
<dbReference type="OMA" id="RGMIRAK"/>
<dbReference type="PhylomeDB" id="O42951"/>
<dbReference type="UniPathway" id="UPA00077">
    <property type="reaction ID" value="UER00150"/>
</dbReference>
<dbReference type="PRO" id="PR:O42951"/>
<dbReference type="Proteomes" id="UP000002485">
    <property type="component" value="Chromosome II"/>
</dbReference>
<dbReference type="GO" id="GO:0005829">
    <property type="term" value="C:cytosol"/>
    <property type="evidence" value="ECO:0007005"/>
    <property type="project" value="PomBase"/>
</dbReference>
<dbReference type="GO" id="GO:0005634">
    <property type="term" value="C:nucleus"/>
    <property type="evidence" value="ECO:0007005"/>
    <property type="project" value="PomBase"/>
</dbReference>
<dbReference type="GO" id="GO:0008696">
    <property type="term" value="F:4-amino-4-deoxychorismate lyase activity"/>
    <property type="evidence" value="ECO:0000266"/>
    <property type="project" value="PomBase"/>
</dbReference>
<dbReference type="GO" id="GO:0019752">
    <property type="term" value="P:carboxylic acid metabolic process"/>
    <property type="evidence" value="ECO:0000318"/>
    <property type="project" value="GO_Central"/>
</dbReference>
<dbReference type="GO" id="GO:0046656">
    <property type="term" value="P:folic acid biosynthetic process"/>
    <property type="evidence" value="ECO:0000266"/>
    <property type="project" value="PomBase"/>
</dbReference>
<dbReference type="GO" id="GO:0046654">
    <property type="term" value="P:tetrahydrofolate biosynthetic process"/>
    <property type="evidence" value="ECO:0007669"/>
    <property type="project" value="UniProtKB-UniPathway"/>
</dbReference>
<dbReference type="Gene3D" id="3.30.470.10">
    <property type="match status" value="1"/>
</dbReference>
<dbReference type="Gene3D" id="3.20.10.10">
    <property type="entry name" value="D-amino Acid Aminotransferase, subunit A, domain 2"/>
    <property type="match status" value="1"/>
</dbReference>
<dbReference type="InterPro" id="IPR001544">
    <property type="entry name" value="Aminotrans_IV"/>
</dbReference>
<dbReference type="InterPro" id="IPR036038">
    <property type="entry name" value="Aminotransferase-like"/>
</dbReference>
<dbReference type="InterPro" id="IPR043132">
    <property type="entry name" value="BCAT-like_C"/>
</dbReference>
<dbReference type="InterPro" id="IPR043131">
    <property type="entry name" value="BCAT-like_N"/>
</dbReference>
<dbReference type="InterPro" id="IPR050571">
    <property type="entry name" value="Class-IV_PLP-Dep_Aminotrnsfr"/>
</dbReference>
<dbReference type="PANTHER" id="PTHR42743">
    <property type="entry name" value="AMINO-ACID AMINOTRANSFERASE"/>
    <property type="match status" value="1"/>
</dbReference>
<dbReference type="PANTHER" id="PTHR42743:SF11">
    <property type="entry name" value="AMINODEOXYCHORISMATE LYASE"/>
    <property type="match status" value="1"/>
</dbReference>
<dbReference type="Pfam" id="PF01063">
    <property type="entry name" value="Aminotran_4"/>
    <property type="match status" value="1"/>
</dbReference>
<dbReference type="SUPFAM" id="SSF56752">
    <property type="entry name" value="D-aminoacid aminotransferase-like PLP-dependent enzymes"/>
    <property type="match status" value="1"/>
</dbReference>
<comment type="function">
    <text evidence="1">Converts 4-amino-4-deoxychorismate into 4-aminobenzoate (PABA) and pyruvate.</text>
</comment>
<comment type="catalytic activity">
    <reaction>
        <text>4-amino-4-deoxychorismate = 4-aminobenzoate + pyruvate + H(+)</text>
        <dbReference type="Rhea" id="RHEA:16201"/>
        <dbReference type="ChEBI" id="CHEBI:15361"/>
        <dbReference type="ChEBI" id="CHEBI:15378"/>
        <dbReference type="ChEBI" id="CHEBI:17836"/>
        <dbReference type="ChEBI" id="CHEBI:58406"/>
        <dbReference type="EC" id="4.1.3.38"/>
    </reaction>
</comment>
<comment type="cofactor">
    <cofactor evidence="1">
        <name>pyridoxal 5'-phosphate</name>
        <dbReference type="ChEBI" id="CHEBI:597326"/>
    </cofactor>
</comment>
<comment type="pathway">
    <text>Cofactor biosynthesis; tetrahydrofolate biosynthesis; 4-aminobenzoate from chorismate: step 2/2.</text>
</comment>
<comment type="subcellular location">
    <subcellularLocation>
        <location evidence="2">Cytoplasm</location>
    </subcellularLocation>
    <subcellularLocation>
        <location evidence="2">Nucleus</location>
    </subcellularLocation>
</comment>
<comment type="similarity">
    <text evidence="3">Belongs to the class-IV pyridoxal-phosphate-dependent aminotransferase family.</text>
</comment>
<name>PABC_SCHPO</name>
<sequence length="231" mass="26264">MEESNLFETTLYDGELFLLPSHLQRMKASAKSLGYSWPGEQYIENKLREAVQDTSMARVRWELSKAGDVTVQIVPIQTLEKAPYTLILDKQPSSTEKNPSCINKMTNRAIYIEAMNRNDAQYSKAQDVLLYNHQGFVTEATIFNVAFHRNGQWITPSLKHGLLSGTMRKNLLENGSIHEDDKGLLQKDNLKNGEQVLLFNSFRKVCKGVLIIQPEKACELLKKKDSSEKLS</sequence>
<evidence type="ECO:0000250" key="1"/>
<evidence type="ECO:0000269" key="2">
    <source>
    </source>
</evidence>
<evidence type="ECO:0000305" key="3"/>
<proteinExistence type="inferred from homology"/>
<accession>O42951</accession>